<feature type="chain" id="PRO_0000213805" description="Sorting nexin-3">
    <location>
        <begin position="1"/>
        <end position="162"/>
    </location>
</feature>
<feature type="domain" description="PX" evidence="1">
    <location>
        <begin position="38"/>
        <end position="161"/>
    </location>
</feature>
<feature type="region of interest" description="Disordered" evidence="2">
    <location>
        <begin position="1"/>
        <end position="23"/>
    </location>
</feature>
<feature type="binding site" evidence="3">
    <location>
        <position position="81"/>
    </location>
    <ligand>
        <name>a 1,2-diacyl-sn-glycero-3-phospho-(1D-myo-inositol-3-phosphate)</name>
        <dbReference type="ChEBI" id="CHEBI:58088"/>
    </ligand>
</feature>
<feature type="binding site" evidence="3">
    <location>
        <position position="83"/>
    </location>
    <ligand>
        <name>a 1,2-diacyl-sn-glycero-3-phospho-(1D-myo-inositol-3-phosphate)</name>
        <dbReference type="ChEBI" id="CHEBI:58088"/>
    </ligand>
</feature>
<feature type="binding site" evidence="3">
    <location>
        <position position="112"/>
    </location>
    <ligand>
        <name>a 1,2-diacyl-sn-glycero-3-phospho-(1D-myo-inositol-3-phosphate)</name>
        <dbReference type="ChEBI" id="CHEBI:58088"/>
    </ligand>
</feature>
<feature type="binding site" evidence="3">
    <location>
        <position position="127"/>
    </location>
    <ligand>
        <name>a 1,2-diacyl-sn-glycero-3-phospho-(1D-myo-inositol-3-phosphate)</name>
        <dbReference type="ChEBI" id="CHEBI:58088"/>
    </ligand>
</feature>
<feature type="strand" evidence="8">
    <location>
        <begin position="36"/>
        <end position="46"/>
    </location>
</feature>
<feature type="strand" evidence="9">
    <location>
        <begin position="50"/>
        <end position="53"/>
    </location>
</feature>
<feature type="strand" evidence="8">
    <location>
        <begin position="57"/>
        <end position="66"/>
    </location>
</feature>
<feature type="strand" evidence="8">
    <location>
        <begin position="74"/>
        <end position="81"/>
    </location>
</feature>
<feature type="helix" evidence="8">
    <location>
        <begin position="82"/>
        <end position="98"/>
    </location>
</feature>
<feature type="helix" evidence="9">
    <location>
        <begin position="117"/>
        <end position="119"/>
    </location>
</feature>
<feature type="helix" evidence="8">
    <location>
        <begin position="121"/>
        <end position="139"/>
    </location>
</feature>
<feature type="helix" evidence="8">
    <location>
        <begin position="142"/>
        <end position="147"/>
    </location>
</feature>
<feature type="helix" evidence="8">
    <location>
        <begin position="149"/>
        <end position="156"/>
    </location>
</feature>
<proteinExistence type="evidence at protein level"/>
<protein>
    <recommendedName>
        <fullName>Sorting nexin-3</fullName>
    </recommendedName>
    <alternativeName>
        <fullName>Golgi retention deficient protein 19</fullName>
    </alternativeName>
</protein>
<keyword id="KW-0002">3D-structure</keyword>
<keyword id="KW-0963">Cytoplasm</keyword>
<keyword id="KW-0333">Golgi apparatus</keyword>
<keyword id="KW-0446">Lipid-binding</keyword>
<keyword id="KW-0472">Membrane</keyword>
<keyword id="KW-0653">Protein transport</keyword>
<keyword id="KW-1185">Reference proteome</keyword>
<keyword id="KW-0813">Transport</keyword>
<dbReference type="EMBL" id="AF016101">
    <property type="protein sequence ID" value="AAC15913.1"/>
    <property type="molecule type" value="Genomic_DNA"/>
</dbReference>
<dbReference type="EMBL" id="Z75265">
    <property type="protein sequence ID" value="CAA99686.1"/>
    <property type="molecule type" value="Genomic_DNA"/>
</dbReference>
<dbReference type="EMBL" id="BK006948">
    <property type="protein sequence ID" value="DAA11118.1"/>
    <property type="molecule type" value="Genomic_DNA"/>
</dbReference>
<dbReference type="PIR" id="S67269">
    <property type="entry name" value="S67269"/>
</dbReference>
<dbReference type="RefSeq" id="NP_015002.3">
    <property type="nucleotide sequence ID" value="NM_001183777.3"/>
</dbReference>
<dbReference type="PDB" id="1OCS">
    <property type="method" value="X-ray"/>
    <property type="resolution" value="2.03 A"/>
    <property type="chains" value="A=1-162"/>
</dbReference>
<dbReference type="PDB" id="1OCU">
    <property type="method" value="X-ray"/>
    <property type="resolution" value="2.30 A"/>
    <property type="chains" value="A/B=1-162"/>
</dbReference>
<dbReference type="PDBsum" id="1OCS"/>
<dbReference type="PDBsum" id="1OCU"/>
<dbReference type="SMR" id="Q08826"/>
<dbReference type="BioGRID" id="34742">
    <property type="interactions" value="106"/>
</dbReference>
<dbReference type="FunCoup" id="Q08826">
    <property type="interactions" value="635"/>
</dbReference>
<dbReference type="IntAct" id="Q08826">
    <property type="interactions" value="15"/>
</dbReference>
<dbReference type="MINT" id="Q08826"/>
<dbReference type="STRING" id="4932.YOR357C"/>
<dbReference type="iPTMnet" id="Q08826"/>
<dbReference type="PaxDb" id="4932-YOR357C"/>
<dbReference type="PeptideAtlas" id="Q08826"/>
<dbReference type="EnsemblFungi" id="YOR357C_mRNA">
    <property type="protein sequence ID" value="YOR357C"/>
    <property type="gene ID" value="YOR357C"/>
</dbReference>
<dbReference type="GeneID" id="854539"/>
<dbReference type="KEGG" id="sce:YOR357C"/>
<dbReference type="AGR" id="SGD:S000005884"/>
<dbReference type="SGD" id="S000005884">
    <property type="gene designation" value="SNX3"/>
</dbReference>
<dbReference type="VEuPathDB" id="FungiDB:YOR357C"/>
<dbReference type="eggNOG" id="KOG2527">
    <property type="taxonomic scope" value="Eukaryota"/>
</dbReference>
<dbReference type="HOGENOM" id="CLU_057172_2_1_1"/>
<dbReference type="InParanoid" id="Q08826"/>
<dbReference type="OMA" id="NMYTDYE"/>
<dbReference type="OrthoDB" id="5227681at2759"/>
<dbReference type="BioCyc" id="YEAST:G3O-33828-MONOMER"/>
<dbReference type="Reactome" id="R-SCE-3238698">
    <property type="pathway name" value="WNT ligand biogenesis and trafficking"/>
</dbReference>
<dbReference type="Reactome" id="R-SCE-5689880">
    <property type="pathway name" value="Ub-specific processing proteases"/>
</dbReference>
<dbReference type="BioGRID-ORCS" id="854539">
    <property type="hits" value="5 hits in 10 CRISPR screens"/>
</dbReference>
<dbReference type="EvolutionaryTrace" id="Q08826"/>
<dbReference type="PRO" id="PR:Q08826"/>
<dbReference type="Proteomes" id="UP000002311">
    <property type="component" value="Chromosome XV"/>
</dbReference>
<dbReference type="RNAct" id="Q08826">
    <property type="molecule type" value="protein"/>
</dbReference>
<dbReference type="GO" id="GO:0005829">
    <property type="term" value="C:cytosol"/>
    <property type="evidence" value="ECO:0000314"/>
    <property type="project" value="SGD"/>
</dbReference>
<dbReference type="GO" id="GO:0031901">
    <property type="term" value="C:early endosome membrane"/>
    <property type="evidence" value="ECO:0000318"/>
    <property type="project" value="GO_Central"/>
</dbReference>
<dbReference type="GO" id="GO:0005768">
    <property type="term" value="C:endosome"/>
    <property type="evidence" value="ECO:0000314"/>
    <property type="project" value="SGD"/>
</dbReference>
<dbReference type="GO" id="GO:0000329">
    <property type="term" value="C:fungal-type vacuole membrane"/>
    <property type="evidence" value="ECO:0007005"/>
    <property type="project" value="SGD"/>
</dbReference>
<dbReference type="GO" id="GO:0000139">
    <property type="term" value="C:Golgi membrane"/>
    <property type="evidence" value="ECO:0007669"/>
    <property type="project" value="UniProtKB-SubCell"/>
</dbReference>
<dbReference type="GO" id="GO:0032994">
    <property type="term" value="C:protein-lipid complex"/>
    <property type="evidence" value="ECO:0000315"/>
    <property type="project" value="CAFA"/>
</dbReference>
<dbReference type="GO" id="GO:0030904">
    <property type="term" value="C:retromer complex"/>
    <property type="evidence" value="ECO:0000318"/>
    <property type="project" value="GO_Central"/>
</dbReference>
<dbReference type="GO" id="GO:0032266">
    <property type="term" value="F:phosphatidylinositol-3-phosphate binding"/>
    <property type="evidence" value="ECO:0000314"/>
    <property type="project" value="SGD"/>
</dbReference>
<dbReference type="GO" id="GO:0032456">
    <property type="term" value="P:endocytic recycling"/>
    <property type="evidence" value="ECO:0000318"/>
    <property type="project" value="GO_Central"/>
</dbReference>
<dbReference type="GO" id="GO:0034499">
    <property type="term" value="P:late endosome to Golgi transport"/>
    <property type="evidence" value="ECO:0000315"/>
    <property type="project" value="SGD"/>
</dbReference>
<dbReference type="GO" id="GO:0008104">
    <property type="term" value="P:protein localization"/>
    <property type="evidence" value="ECO:0000315"/>
    <property type="project" value="SGD"/>
</dbReference>
<dbReference type="GO" id="GO:0015031">
    <property type="term" value="P:protein transport"/>
    <property type="evidence" value="ECO:0007669"/>
    <property type="project" value="UniProtKB-KW"/>
</dbReference>
<dbReference type="CDD" id="cd07295">
    <property type="entry name" value="PX_Grd19"/>
    <property type="match status" value="1"/>
</dbReference>
<dbReference type="DisProt" id="DP00482"/>
<dbReference type="FunFam" id="3.30.1520.10:FF:000030">
    <property type="entry name" value="Sorting nexin-3, variant"/>
    <property type="match status" value="1"/>
</dbReference>
<dbReference type="Gene3D" id="3.30.1520.10">
    <property type="entry name" value="Phox-like domain"/>
    <property type="match status" value="1"/>
</dbReference>
<dbReference type="InterPro" id="IPR001683">
    <property type="entry name" value="PX_dom"/>
</dbReference>
<dbReference type="InterPro" id="IPR036871">
    <property type="entry name" value="PX_dom_sf"/>
</dbReference>
<dbReference type="InterPro" id="IPR042138">
    <property type="entry name" value="PX_Grd19_PX"/>
</dbReference>
<dbReference type="InterPro" id="IPR051074">
    <property type="entry name" value="Sorting_Nexin"/>
</dbReference>
<dbReference type="PANTHER" id="PTHR45963">
    <property type="entry name" value="RE52028P"/>
    <property type="match status" value="1"/>
</dbReference>
<dbReference type="PANTHER" id="PTHR45963:SF2">
    <property type="entry name" value="RE52028P"/>
    <property type="match status" value="1"/>
</dbReference>
<dbReference type="Pfam" id="PF00787">
    <property type="entry name" value="PX"/>
    <property type="match status" value="1"/>
</dbReference>
<dbReference type="SMART" id="SM00312">
    <property type="entry name" value="PX"/>
    <property type="match status" value="1"/>
</dbReference>
<dbReference type="SUPFAM" id="SSF64268">
    <property type="entry name" value="PX domain"/>
    <property type="match status" value="1"/>
</dbReference>
<dbReference type="PROSITE" id="PS50195">
    <property type="entry name" value="PX"/>
    <property type="match status" value="1"/>
</dbReference>
<organism>
    <name type="scientific">Saccharomyces cerevisiae (strain ATCC 204508 / S288c)</name>
    <name type="common">Baker's yeast</name>
    <dbReference type="NCBI Taxonomy" id="559292"/>
    <lineage>
        <taxon>Eukaryota</taxon>
        <taxon>Fungi</taxon>
        <taxon>Dikarya</taxon>
        <taxon>Ascomycota</taxon>
        <taxon>Saccharomycotina</taxon>
        <taxon>Saccharomycetes</taxon>
        <taxon>Saccharomycetales</taxon>
        <taxon>Saccharomycetaceae</taxon>
        <taxon>Saccharomyces</taxon>
    </lineage>
</organism>
<comment type="function">
    <text evidence="6">Required for retention of late Golgi membrane proteins. Component of the retrieval machinery that functions by direct interaction with the cytosolic tails of certain TGN membrane proteins during the sorting/budding process at the prevacuolar compartment. Binds phosphatidylinositol 3-phosphate (PtdIns(P3)).</text>
</comment>
<comment type="subunit">
    <text evidence="3 4">Monomer. Interacts with RBD2, YIF1, YIP1 and YIP5.</text>
</comment>
<comment type="subcellular location">
    <subcellularLocation>
        <location evidence="6">Cytoplasm</location>
    </subcellularLocation>
    <subcellularLocation>
        <location evidence="7">Golgi apparatus membrane</location>
        <topology evidence="7">Peripheral membrane protein</topology>
        <orientation evidence="7">Cytoplasmic side</orientation>
    </subcellularLocation>
    <subcellularLocation>
        <location evidence="7">Prevacuolar compartment membrane</location>
        <topology evidence="7">Peripheral membrane protein</topology>
        <orientation evidence="7">Cytoplasmic side</orientation>
    </subcellularLocation>
    <text>Mainly cytoplasmic. A minor amount associates with membranes.</text>
</comment>
<comment type="disruption phenotype">
    <text evidence="5">Abnormal retrograde transport to the Golgi apparatus with proteins missorted to the vacuole (PubMed:28404745). Sensitive to neomycin and trifluoperazine; sensitivity is suppressed by knockout of ANY1 (PubMed:28404745).</text>
</comment>
<comment type="similarity">
    <text evidence="7">Belongs to the sorting nexin family.</text>
</comment>
<gene>
    <name type="primary">SNX3</name>
    <name type="synonym">GRD19</name>
    <name type="ordered locus">YOR357C</name>
</gene>
<name>SNX3_YEAST</name>
<sequence length="162" mass="18770">MPREFKSFGSTEKSLLSKGHGEPSYSEIYAEPENFLEIEVHNPKTHIPNGMDSKGMFTDYEIICRTNLPSFHKRVSKVRRRYSDFEFFRKCLIKEISMLNHPKVMVPHLPGKILLSNRFSNEVIEERRQGLNTWMQSVAGHPLLQSGSKVLVRFIEAEKFVG</sequence>
<evidence type="ECO:0000255" key="1">
    <source>
        <dbReference type="PROSITE-ProRule" id="PRU00147"/>
    </source>
</evidence>
<evidence type="ECO:0000256" key="2">
    <source>
        <dbReference type="SAM" id="MobiDB-lite"/>
    </source>
</evidence>
<evidence type="ECO:0000269" key="3">
    <source>
    </source>
</evidence>
<evidence type="ECO:0000269" key="4">
    <source>
    </source>
</evidence>
<evidence type="ECO:0000269" key="5">
    <source>
    </source>
</evidence>
<evidence type="ECO:0000269" key="6">
    <source>
    </source>
</evidence>
<evidence type="ECO:0000305" key="7"/>
<evidence type="ECO:0007829" key="8">
    <source>
        <dbReference type="PDB" id="1OCS"/>
    </source>
</evidence>
<evidence type="ECO:0007829" key="9">
    <source>
        <dbReference type="PDB" id="1OCU"/>
    </source>
</evidence>
<accession>Q08826</accession>
<accession>D6W352</accession>
<reference key="1">
    <citation type="journal article" date="1998" name="J. Cell Biol.">
        <title>Retrieval of resident late-Golgi membrane proteins from the prevacuolar compartment of Saccharomyces cerevisiae is dependent on the function of Grd19p.</title>
        <authorList>
            <person name="Voos W."/>
            <person name="Stevens T.H."/>
        </authorList>
    </citation>
    <scope>NUCLEOTIDE SEQUENCE [GENOMIC DNA]</scope>
    <scope>FUNCTION</scope>
    <scope>SUBCELLULAR LOCATION</scope>
</reference>
<reference key="2">
    <citation type="journal article" date="1997" name="Nature">
        <title>The nucleotide sequence of Saccharomyces cerevisiae chromosome XV.</title>
        <authorList>
            <person name="Dujon B."/>
            <person name="Albermann K."/>
            <person name="Aldea M."/>
            <person name="Alexandraki D."/>
            <person name="Ansorge W."/>
            <person name="Arino J."/>
            <person name="Benes V."/>
            <person name="Bohn C."/>
            <person name="Bolotin-Fukuhara M."/>
            <person name="Bordonne R."/>
            <person name="Boyer J."/>
            <person name="Camasses A."/>
            <person name="Casamayor A."/>
            <person name="Casas C."/>
            <person name="Cheret G."/>
            <person name="Cziepluch C."/>
            <person name="Daignan-Fornier B."/>
            <person name="Dang V.-D."/>
            <person name="de Haan M."/>
            <person name="Delius H."/>
            <person name="Durand P."/>
            <person name="Fairhead C."/>
            <person name="Feldmann H."/>
            <person name="Gaillon L."/>
            <person name="Galisson F."/>
            <person name="Gamo F.-J."/>
            <person name="Gancedo C."/>
            <person name="Goffeau A."/>
            <person name="Goulding S.E."/>
            <person name="Grivell L.A."/>
            <person name="Habbig B."/>
            <person name="Hand N.J."/>
            <person name="Hani J."/>
            <person name="Hattenhorst U."/>
            <person name="Hebling U."/>
            <person name="Hernando Y."/>
            <person name="Herrero E."/>
            <person name="Heumann K."/>
            <person name="Hiesel R."/>
            <person name="Hilger F."/>
            <person name="Hofmann B."/>
            <person name="Hollenberg C.P."/>
            <person name="Hughes B."/>
            <person name="Jauniaux J.-C."/>
            <person name="Kalogeropoulos A."/>
            <person name="Katsoulou C."/>
            <person name="Kordes E."/>
            <person name="Lafuente M.J."/>
            <person name="Landt O."/>
            <person name="Louis E.J."/>
            <person name="Maarse A.C."/>
            <person name="Madania A."/>
            <person name="Mannhaupt G."/>
            <person name="Marck C."/>
            <person name="Martin R.P."/>
            <person name="Mewes H.-W."/>
            <person name="Michaux G."/>
            <person name="Paces V."/>
            <person name="Parle-McDermott A.G."/>
            <person name="Pearson B.M."/>
            <person name="Perrin A."/>
            <person name="Pettersson B."/>
            <person name="Poch O."/>
            <person name="Pohl T.M."/>
            <person name="Poirey R."/>
            <person name="Portetelle D."/>
            <person name="Pujol A."/>
            <person name="Purnelle B."/>
            <person name="Ramezani Rad M."/>
            <person name="Rechmann S."/>
            <person name="Schwager C."/>
            <person name="Schweizer M."/>
            <person name="Sor F."/>
            <person name="Sterky F."/>
            <person name="Tarassov I.A."/>
            <person name="Teodoru C."/>
            <person name="Tettelin H."/>
            <person name="Thierry A."/>
            <person name="Tobiasch E."/>
            <person name="Tzermia M."/>
            <person name="Uhlen M."/>
            <person name="Unseld M."/>
            <person name="Valens M."/>
            <person name="Vandenbol M."/>
            <person name="Vetter I."/>
            <person name="Vlcek C."/>
            <person name="Voet M."/>
            <person name="Volckaert G."/>
            <person name="Voss H."/>
            <person name="Wambutt R."/>
            <person name="Wedler H."/>
            <person name="Wiemann S."/>
            <person name="Winsor B."/>
            <person name="Wolfe K.H."/>
            <person name="Zollner A."/>
            <person name="Zumstein E."/>
            <person name="Kleine K."/>
        </authorList>
    </citation>
    <scope>NUCLEOTIDE SEQUENCE [LARGE SCALE GENOMIC DNA]</scope>
    <source>
        <strain>ATCC 204508 / S288c</strain>
    </source>
</reference>
<reference key="3">
    <citation type="journal article" date="2014" name="G3 (Bethesda)">
        <title>The reference genome sequence of Saccharomyces cerevisiae: Then and now.</title>
        <authorList>
            <person name="Engel S.R."/>
            <person name="Dietrich F.S."/>
            <person name="Fisk D.G."/>
            <person name="Binkley G."/>
            <person name="Balakrishnan R."/>
            <person name="Costanzo M.C."/>
            <person name="Dwight S.S."/>
            <person name="Hitz B.C."/>
            <person name="Karra K."/>
            <person name="Nash R.S."/>
            <person name="Weng S."/>
            <person name="Wong E.D."/>
            <person name="Lloyd P."/>
            <person name="Skrzypek M.S."/>
            <person name="Miyasato S.R."/>
            <person name="Simison M."/>
            <person name="Cherry J.M."/>
        </authorList>
    </citation>
    <scope>GENOME REANNOTATION</scope>
    <source>
        <strain>ATCC 204508 / S288c</strain>
    </source>
</reference>
<reference key="4">
    <citation type="journal article" date="2004" name="Mol. Cell. Proteomics">
        <title>The phox homology (PX) domain protein interaction network in yeast.</title>
        <authorList>
            <person name="Vollert C.S."/>
            <person name="Uetz P."/>
        </authorList>
    </citation>
    <scope>INTERACTION WITH RBD2; YIF1; YIP1 AND YIP5</scope>
</reference>
<reference key="5">
    <citation type="journal article" date="2007" name="Proc. Natl. Acad. Sci. U.S.A.">
        <title>Analysis of phosphorylation sites on proteins from Saccharomyces cerevisiae by electron transfer dissociation (ETD) mass spectrometry.</title>
        <authorList>
            <person name="Chi A."/>
            <person name="Huttenhower C."/>
            <person name="Geer L.Y."/>
            <person name="Coon J.J."/>
            <person name="Syka J.E.P."/>
            <person name="Bai D.L."/>
            <person name="Shabanowitz J."/>
            <person name="Burke D.J."/>
            <person name="Troyanskaya O.G."/>
            <person name="Hunt D.F."/>
        </authorList>
    </citation>
    <scope>IDENTIFICATION BY MASS SPECTROMETRY [LARGE SCALE ANALYSIS]</scope>
</reference>
<reference key="6">
    <citation type="journal article" date="2008" name="Mol. Cell. Proteomics">
        <title>A multidimensional chromatography technology for in-depth phosphoproteome analysis.</title>
        <authorList>
            <person name="Albuquerque C.P."/>
            <person name="Smolka M.B."/>
            <person name="Payne S.H."/>
            <person name="Bafna V."/>
            <person name="Eng J."/>
            <person name="Zhou H."/>
        </authorList>
    </citation>
    <scope>IDENTIFICATION BY MASS SPECTROMETRY [LARGE SCALE ANALYSIS]</scope>
</reference>
<reference key="7">
    <citation type="journal article" date="2017" name="Mol. Biol. Cell">
        <title>Quantitative high-content imaging identifies novel regulators of Neo1 trafficking at endosomes.</title>
        <authorList>
            <person name="Dalton L.E."/>
            <person name="Bean B.D.M."/>
            <person name="Davey M."/>
            <person name="Conibear E."/>
        </authorList>
    </citation>
    <scope>DISRUPTION PHENOTYPE</scope>
</reference>
<reference key="8">
    <citation type="journal article" date="2003" name="J. Biol. Chem.">
        <title>Crystal structure of the yeast Phox homology (PX) domain protein Grd19p complexed to phosphatidylinositol-3-phosphate.</title>
        <authorList>
            <person name="Zhou C.-Z."/>
            <person name="de La Sierra-Gallay I.L."/>
            <person name="Quevillon-Cheruel S."/>
            <person name="Collinet B."/>
            <person name="Minard P."/>
            <person name="Blondeau K."/>
            <person name="Henckes G."/>
            <person name="Aufrere R."/>
            <person name="Leulliot N."/>
            <person name="Graille M."/>
            <person name="Sorel I."/>
            <person name="Savarin P."/>
            <person name="de la Torre F."/>
            <person name="Poupon A."/>
            <person name="Janin J."/>
            <person name="van Tilbeurgh H."/>
        </authorList>
    </citation>
    <scope>X-RAY CRYSTALLOGRAPHY (2.03 ANGSTROMS) IN COMPLEX WITH PHOSPHATIDYLINOSITOL 3-PHOSPHATE</scope>
    <scope>SUBUNIT</scope>
</reference>